<reference key="1">
    <citation type="submission" date="2007-05" db="EMBL/GenBank/DDBJ databases">
        <title>Complete sequence of Geobacter uraniireducens Rf4.</title>
        <authorList>
            <consortium name="US DOE Joint Genome Institute"/>
            <person name="Copeland A."/>
            <person name="Lucas S."/>
            <person name="Lapidus A."/>
            <person name="Barry K."/>
            <person name="Detter J.C."/>
            <person name="Glavina del Rio T."/>
            <person name="Hammon N."/>
            <person name="Israni S."/>
            <person name="Dalin E."/>
            <person name="Tice H."/>
            <person name="Pitluck S."/>
            <person name="Chertkov O."/>
            <person name="Brettin T."/>
            <person name="Bruce D."/>
            <person name="Han C."/>
            <person name="Schmutz J."/>
            <person name="Larimer F."/>
            <person name="Land M."/>
            <person name="Hauser L."/>
            <person name="Kyrpides N."/>
            <person name="Mikhailova N."/>
            <person name="Shelobolina E."/>
            <person name="Aklujkar M."/>
            <person name="Lovley D."/>
            <person name="Richardson P."/>
        </authorList>
    </citation>
    <scope>NUCLEOTIDE SEQUENCE [LARGE SCALE GENOMIC DNA]</scope>
    <source>
        <strain>ATCC BAA-1134 / JCM 13001 / Rf4</strain>
    </source>
</reference>
<sequence length="118" mass="13318">MLGAYLPIIVLVVVAVLFGCGSLIFSSLIGQKKPSVVKMAPYECGCEPVGSARERFSIKFYIIAMLFILFDIEAVFLYPWAVLFKRLGMFGLMEMGVFIVILFVGYIYVWKKGALEWE</sequence>
<organism>
    <name type="scientific">Geotalea uraniireducens (strain Rf4)</name>
    <name type="common">Geobacter uraniireducens</name>
    <dbReference type="NCBI Taxonomy" id="351605"/>
    <lineage>
        <taxon>Bacteria</taxon>
        <taxon>Pseudomonadati</taxon>
        <taxon>Thermodesulfobacteriota</taxon>
        <taxon>Desulfuromonadia</taxon>
        <taxon>Geobacterales</taxon>
        <taxon>Geobacteraceae</taxon>
        <taxon>Geotalea</taxon>
    </lineage>
</organism>
<protein>
    <recommendedName>
        <fullName evidence="1">NADH-quinone oxidoreductase subunit A 2</fullName>
        <ecNumber evidence="1">7.1.1.-</ecNumber>
    </recommendedName>
    <alternativeName>
        <fullName evidence="1">NADH dehydrogenase I subunit A 2</fullName>
    </alternativeName>
    <alternativeName>
        <fullName evidence="1">NDH-1 subunit A 2</fullName>
    </alternativeName>
    <alternativeName>
        <fullName evidence="1">NUO1 2</fullName>
    </alternativeName>
</protein>
<evidence type="ECO:0000255" key="1">
    <source>
        <dbReference type="HAMAP-Rule" id="MF_01394"/>
    </source>
</evidence>
<dbReference type="EC" id="7.1.1.-" evidence="1"/>
<dbReference type="EMBL" id="CP000698">
    <property type="protein sequence ID" value="ABQ28387.1"/>
    <property type="molecule type" value="Genomic_DNA"/>
</dbReference>
<dbReference type="RefSeq" id="WP_011941018.1">
    <property type="nucleotide sequence ID" value="NC_009483.1"/>
</dbReference>
<dbReference type="SMR" id="A5G9B9"/>
<dbReference type="STRING" id="351605.Gura_4244"/>
<dbReference type="KEGG" id="gur:Gura_4244"/>
<dbReference type="HOGENOM" id="CLU_119549_3_1_7"/>
<dbReference type="OrthoDB" id="9791970at2"/>
<dbReference type="Proteomes" id="UP000006695">
    <property type="component" value="Chromosome"/>
</dbReference>
<dbReference type="GO" id="GO:0030964">
    <property type="term" value="C:NADH dehydrogenase complex"/>
    <property type="evidence" value="ECO:0007669"/>
    <property type="project" value="TreeGrafter"/>
</dbReference>
<dbReference type="GO" id="GO:0005886">
    <property type="term" value="C:plasma membrane"/>
    <property type="evidence" value="ECO:0007669"/>
    <property type="project" value="UniProtKB-SubCell"/>
</dbReference>
<dbReference type="GO" id="GO:0008137">
    <property type="term" value="F:NADH dehydrogenase (ubiquinone) activity"/>
    <property type="evidence" value="ECO:0007669"/>
    <property type="project" value="InterPro"/>
</dbReference>
<dbReference type="GO" id="GO:0050136">
    <property type="term" value="F:NADH:ubiquinone reductase (non-electrogenic) activity"/>
    <property type="evidence" value="ECO:0007669"/>
    <property type="project" value="UniProtKB-UniRule"/>
</dbReference>
<dbReference type="GO" id="GO:0048038">
    <property type="term" value="F:quinone binding"/>
    <property type="evidence" value="ECO:0007669"/>
    <property type="project" value="UniProtKB-KW"/>
</dbReference>
<dbReference type="FunFam" id="1.20.58.1610:FF:000002">
    <property type="entry name" value="NADH-quinone oxidoreductase subunit A"/>
    <property type="match status" value="1"/>
</dbReference>
<dbReference type="Gene3D" id="1.20.58.1610">
    <property type="entry name" value="NADH:ubiquinone/plastoquinone oxidoreductase, chain 3"/>
    <property type="match status" value="1"/>
</dbReference>
<dbReference type="HAMAP" id="MF_01394">
    <property type="entry name" value="NDH1_NuoA"/>
    <property type="match status" value="1"/>
</dbReference>
<dbReference type="InterPro" id="IPR023043">
    <property type="entry name" value="NAD(P)H_OxRDtase_bac/plastid"/>
</dbReference>
<dbReference type="InterPro" id="IPR000440">
    <property type="entry name" value="NADH_UbQ/plastoQ_OxRdtase_su3"/>
</dbReference>
<dbReference type="InterPro" id="IPR038430">
    <property type="entry name" value="NDAH_ubi_oxred_su3_sf"/>
</dbReference>
<dbReference type="PANTHER" id="PTHR11058:SF22">
    <property type="entry name" value="NADH-QUINONE OXIDOREDUCTASE SUBUNIT A"/>
    <property type="match status" value="1"/>
</dbReference>
<dbReference type="PANTHER" id="PTHR11058">
    <property type="entry name" value="NADH-UBIQUINONE OXIDOREDUCTASE CHAIN 3"/>
    <property type="match status" value="1"/>
</dbReference>
<dbReference type="Pfam" id="PF00507">
    <property type="entry name" value="Oxidored_q4"/>
    <property type="match status" value="1"/>
</dbReference>
<keyword id="KW-0997">Cell inner membrane</keyword>
<keyword id="KW-1003">Cell membrane</keyword>
<keyword id="KW-0472">Membrane</keyword>
<keyword id="KW-0520">NAD</keyword>
<keyword id="KW-0874">Quinone</keyword>
<keyword id="KW-1185">Reference proteome</keyword>
<keyword id="KW-1278">Translocase</keyword>
<keyword id="KW-0812">Transmembrane</keyword>
<keyword id="KW-1133">Transmembrane helix</keyword>
<keyword id="KW-0813">Transport</keyword>
<keyword id="KW-0830">Ubiquinone</keyword>
<accession>A5G9B9</accession>
<proteinExistence type="inferred from homology"/>
<gene>
    <name evidence="1" type="primary">nuoA2</name>
    <name type="ordered locus">Gura_4244</name>
</gene>
<name>NUOA2_GEOUR</name>
<comment type="function">
    <text evidence="1">NDH-1 shuttles electrons from NADH, via FMN and iron-sulfur (Fe-S) centers, to quinones in the respiratory chain. The immediate electron acceptor for the enzyme in this species is believed to be ubiquinone. Couples the redox reaction to proton translocation (for every two electrons transferred, four hydrogen ions are translocated across the cytoplasmic membrane), and thus conserves the redox energy in a proton gradient.</text>
</comment>
<comment type="catalytic activity">
    <reaction evidence="1">
        <text>a quinone + NADH + 5 H(+)(in) = a quinol + NAD(+) + 4 H(+)(out)</text>
        <dbReference type="Rhea" id="RHEA:57888"/>
        <dbReference type="ChEBI" id="CHEBI:15378"/>
        <dbReference type="ChEBI" id="CHEBI:24646"/>
        <dbReference type="ChEBI" id="CHEBI:57540"/>
        <dbReference type="ChEBI" id="CHEBI:57945"/>
        <dbReference type="ChEBI" id="CHEBI:132124"/>
    </reaction>
</comment>
<comment type="subunit">
    <text evidence="1">NDH-1 is composed of 14 different subunits. Subunits NuoA, H, J, K, L, M, N constitute the membrane sector of the complex.</text>
</comment>
<comment type="subcellular location">
    <subcellularLocation>
        <location evidence="1">Cell inner membrane</location>
        <topology evidence="1">Multi-pass membrane protein</topology>
    </subcellularLocation>
</comment>
<comment type="similarity">
    <text evidence="1">Belongs to the complex I subunit 3 family.</text>
</comment>
<feature type="chain" id="PRO_0000362696" description="NADH-quinone oxidoreductase subunit A 2">
    <location>
        <begin position="1"/>
        <end position="118"/>
    </location>
</feature>
<feature type="transmembrane region" description="Helical" evidence="1">
    <location>
        <begin position="5"/>
        <end position="25"/>
    </location>
</feature>
<feature type="transmembrane region" description="Helical" evidence="1">
    <location>
        <begin position="62"/>
        <end position="82"/>
    </location>
</feature>
<feature type="transmembrane region" description="Helical" evidence="1">
    <location>
        <begin position="87"/>
        <end position="107"/>
    </location>
</feature>